<reference key="1">
    <citation type="journal article" date="2003" name="Nature">
        <title>Yeast genome duplication was followed by asynchronous differentiation of duplicated genes.</title>
        <authorList>
            <person name="Langkjaer R.B."/>
            <person name="Cliften P.F."/>
            <person name="Johnston M."/>
            <person name="Piskur J."/>
        </authorList>
    </citation>
    <scope>NUCLEOTIDE SEQUENCE [GENOMIC DNA]</scope>
    <source>
        <strain>ATCC 58438 / CBS 3082 / BCRC 21498 / NBRC 1685 / JCM 7257 / NCYC 543 / NRRL Y-12651</strain>
    </source>
</reference>
<dbReference type="EC" id="2.3.1.225"/>
<dbReference type="EMBL" id="AY144990">
    <property type="protein sequence ID" value="AAO32553.1"/>
    <property type="molecule type" value="Genomic_DNA"/>
</dbReference>
<dbReference type="SMR" id="Q875S9"/>
<dbReference type="GO" id="GO:0031901">
    <property type="term" value="C:early endosome membrane"/>
    <property type="evidence" value="ECO:0007669"/>
    <property type="project" value="UniProtKB-SubCell"/>
</dbReference>
<dbReference type="GO" id="GO:0000139">
    <property type="term" value="C:Golgi membrane"/>
    <property type="evidence" value="ECO:0007669"/>
    <property type="project" value="UniProtKB-SubCell"/>
</dbReference>
<dbReference type="GO" id="GO:0019706">
    <property type="term" value="F:protein-cysteine S-palmitoyltransferase activity"/>
    <property type="evidence" value="ECO:0007669"/>
    <property type="project" value="UniProtKB-EC"/>
</dbReference>
<dbReference type="FunFam" id="1.25.40.20:FF:000301">
    <property type="entry name" value="Palmitoyltransferase"/>
    <property type="match status" value="1"/>
</dbReference>
<dbReference type="Gene3D" id="1.25.40.20">
    <property type="entry name" value="Ankyrin repeat-containing domain"/>
    <property type="match status" value="2"/>
</dbReference>
<dbReference type="InterPro" id="IPR002110">
    <property type="entry name" value="Ankyrin_rpt"/>
</dbReference>
<dbReference type="InterPro" id="IPR036770">
    <property type="entry name" value="Ankyrin_rpt-contain_sf"/>
</dbReference>
<dbReference type="InterPro" id="IPR001594">
    <property type="entry name" value="Palmitoyltrfase_DHHC"/>
</dbReference>
<dbReference type="PANTHER" id="PTHR24161">
    <property type="entry name" value="ANK_REP_REGION DOMAIN-CONTAINING PROTEIN-RELATED"/>
    <property type="match status" value="1"/>
</dbReference>
<dbReference type="PANTHER" id="PTHR24161:SF85">
    <property type="entry name" value="PALMITOYLTRANSFERASE HIP14"/>
    <property type="match status" value="1"/>
</dbReference>
<dbReference type="Pfam" id="PF12796">
    <property type="entry name" value="Ank_2"/>
    <property type="match status" value="2"/>
</dbReference>
<dbReference type="Pfam" id="PF01529">
    <property type="entry name" value="DHHC"/>
    <property type="match status" value="1"/>
</dbReference>
<dbReference type="SMART" id="SM00248">
    <property type="entry name" value="ANK"/>
    <property type="match status" value="6"/>
</dbReference>
<dbReference type="SUPFAM" id="SSF48403">
    <property type="entry name" value="Ankyrin repeat"/>
    <property type="match status" value="1"/>
</dbReference>
<dbReference type="PROSITE" id="PS50297">
    <property type="entry name" value="ANK_REP_REGION"/>
    <property type="match status" value="1"/>
</dbReference>
<dbReference type="PROSITE" id="PS50088">
    <property type="entry name" value="ANK_REPEAT"/>
    <property type="match status" value="4"/>
</dbReference>
<dbReference type="PROSITE" id="PS50216">
    <property type="entry name" value="DHHC"/>
    <property type="match status" value="1"/>
</dbReference>
<name>AKR1_LACK1</name>
<gene>
    <name type="primary">AKR1</name>
</gene>
<comment type="function">
    <text evidence="1">Palmitoyltransferase specific for casein kinase 1.</text>
</comment>
<comment type="catalytic activity">
    <reaction>
        <text>L-cysteinyl-[protein] + hexadecanoyl-CoA = S-hexadecanoyl-L-cysteinyl-[protein] + CoA</text>
        <dbReference type="Rhea" id="RHEA:36683"/>
        <dbReference type="Rhea" id="RHEA-COMP:10131"/>
        <dbReference type="Rhea" id="RHEA-COMP:11032"/>
        <dbReference type="ChEBI" id="CHEBI:29950"/>
        <dbReference type="ChEBI" id="CHEBI:57287"/>
        <dbReference type="ChEBI" id="CHEBI:57379"/>
        <dbReference type="ChEBI" id="CHEBI:74151"/>
        <dbReference type="EC" id="2.3.1.225"/>
    </reaction>
</comment>
<comment type="subcellular location">
    <subcellularLocation>
        <location>Early endosome membrane</location>
        <topology>Multi-pass membrane protein</topology>
    </subcellularLocation>
    <subcellularLocation>
        <location evidence="1">Golgi apparatus membrane</location>
        <topology evidence="1">Multi-pass membrane protein</topology>
    </subcellularLocation>
</comment>
<comment type="domain">
    <text evidence="1">The DHHC domain is required for palmitoyltransferase activity.</text>
</comment>
<comment type="similarity">
    <text evidence="5">Belongs to the DHHC palmitoyltransferase family. AKR/ZDHHC17 subfamily.</text>
</comment>
<organism>
    <name type="scientific">Lachancea kluyveri (strain ATCC 58438 / CBS 3082 / BCRC 21498 / NBRC 1685 / JCM 7257 / NCYC 543 / NRRL Y-12651)</name>
    <name type="common">Yeast</name>
    <name type="synonym">Saccharomyces kluyveri</name>
    <dbReference type="NCBI Taxonomy" id="226302"/>
    <lineage>
        <taxon>Eukaryota</taxon>
        <taxon>Fungi</taxon>
        <taxon>Dikarya</taxon>
        <taxon>Ascomycota</taxon>
        <taxon>Saccharomycotina</taxon>
        <taxon>Saccharomycetes</taxon>
        <taxon>Saccharomycetales</taxon>
        <taxon>Saccharomycetaceae</taxon>
        <taxon>Lachancea</taxon>
    </lineage>
</organism>
<protein>
    <recommendedName>
        <fullName>Palmitoyltransferase AKR1</fullName>
        <ecNumber>2.3.1.225</ecNumber>
    </recommendedName>
    <alternativeName>
        <fullName>Ankyrin repeat-containing protein AKR1</fullName>
    </alternativeName>
</protein>
<feature type="chain" id="PRO_0000212930" description="Palmitoyltransferase AKR1">
    <location>
        <begin position="1"/>
        <end position="737"/>
    </location>
</feature>
<feature type="topological domain" description="Cytoplasmic" evidence="2">
    <location>
        <begin position="1"/>
        <end position="304"/>
    </location>
</feature>
<feature type="transmembrane region" description="Helical" evidence="2">
    <location>
        <begin position="305"/>
        <end position="325"/>
    </location>
</feature>
<feature type="transmembrane region" description="Helical" evidence="2">
    <location>
        <begin position="326"/>
        <end position="346"/>
    </location>
</feature>
<feature type="topological domain" description="Cytoplasmic" evidence="2">
    <location>
        <begin position="347"/>
        <end position="364"/>
    </location>
</feature>
<feature type="transmembrane region" description="Helical" evidence="2">
    <location>
        <begin position="365"/>
        <end position="385"/>
    </location>
</feature>
<feature type="topological domain" description="Lumenal" evidence="2">
    <location>
        <begin position="386"/>
        <end position="396"/>
    </location>
</feature>
<feature type="transmembrane region" description="Helical" evidence="2">
    <location>
        <begin position="397"/>
        <end position="417"/>
    </location>
</feature>
<feature type="topological domain" description="Cytoplasmic" evidence="2">
    <location>
        <begin position="418"/>
        <end position="493"/>
    </location>
</feature>
<feature type="transmembrane region" description="Helical" evidence="2">
    <location>
        <begin position="494"/>
        <end position="514"/>
    </location>
</feature>
<feature type="topological domain" description="Lumenal" evidence="2">
    <location>
        <begin position="515"/>
        <end position="547"/>
    </location>
</feature>
<feature type="transmembrane region" description="Helical" evidence="2">
    <location>
        <begin position="548"/>
        <end position="568"/>
    </location>
</feature>
<feature type="topological domain" description="Cytoplasmic" evidence="2">
    <location>
        <begin position="569"/>
        <end position="737"/>
    </location>
</feature>
<feature type="repeat" description="ANK 1">
    <location>
        <begin position="54"/>
        <end position="84"/>
    </location>
</feature>
<feature type="repeat" description="ANK 2">
    <location>
        <begin position="90"/>
        <end position="119"/>
    </location>
</feature>
<feature type="repeat" description="ANK 3">
    <location>
        <begin position="124"/>
        <end position="153"/>
    </location>
</feature>
<feature type="repeat" description="ANK 4">
    <location>
        <begin position="157"/>
        <end position="190"/>
    </location>
</feature>
<feature type="repeat" description="ANK 5">
    <location>
        <begin position="194"/>
        <end position="223"/>
    </location>
</feature>
<feature type="repeat" description="ANK 6">
    <location>
        <begin position="227"/>
        <end position="256"/>
    </location>
</feature>
<feature type="domain" description="DHHC" evidence="3">
    <location>
        <begin position="450"/>
        <end position="500"/>
    </location>
</feature>
<feature type="region of interest" description="Disordered" evidence="4">
    <location>
        <begin position="1"/>
        <end position="47"/>
    </location>
</feature>
<feature type="compositionally biased region" description="Polar residues" evidence="4">
    <location>
        <begin position="9"/>
        <end position="33"/>
    </location>
</feature>
<feature type="active site" description="S-palmitoyl cysteine intermediate" evidence="1">
    <location>
        <position position="480"/>
    </location>
</feature>
<evidence type="ECO:0000250" key="1"/>
<evidence type="ECO:0000255" key="2"/>
<evidence type="ECO:0000255" key="3">
    <source>
        <dbReference type="PROSITE-ProRule" id="PRU00067"/>
    </source>
</evidence>
<evidence type="ECO:0000256" key="4">
    <source>
        <dbReference type="SAM" id="MobiDB-lite"/>
    </source>
</evidence>
<evidence type="ECO:0000305" key="5"/>
<proteinExistence type="inferred from homology"/>
<sequence length="737" mass="84025">MKQIDSEDSITVPNDTPEDNSASSMQPVMSNLSIEEHQSENEPIEQEQADAKDPLLSKYHLACQQGDLATVKEIIENGVIDLKHDYDDVERVSGLHWASINNRLSVVRYLISKDVDVNFQGGELNATPLHWAARYGYVYIVDYLLEHGADPSVTDAQGFNLLHLSINSSNIMLVIYVLFFVIDDKLDIDCVDPNGRTALLWAAYQGDSLSVETLLKFRASVKATDKGGFTPLHWGTVKGQAQVLKHLIENGADFFQKTADGKNCFAIAHDMNTTGSLVGALYQCGFNKEGFAIPVYFKKSLHTKLVTFFAPWIFIGVLFKCFASIHPIFSLIFSILLGLGMRYTLKKYVIPAYAQRNTRQSFLKTPFLAGVFSGSVFWASYTWLTRIMPLTLIEEPITNLLFFAGVVLLASLFVKLVRSDPGLIPEETDHSKVKETIKELLNVGKFDAKHFCISTWVRKPIRSKFSNFSRALVTRFDHFCPWIYNDIGLRNHKTFLFFILCLETCIFVFLKLCMEYFDVLEDTFEDDYDLNCGIFGEDLCAGFFFDTFTFLVLAWTCFQGIWVGFLTFVQLFQTAKGVTNYEFSTLSKRRHNHDSSVNEYFTTTPLELIDEEEADPLNPVIPGNNPRDPLMQKSRTCFGICWTLTGLDQFVMVIKETFGVAQREEPRNNILSFKISTDYGWRTNLKDFWLTSDITAPTWQRFLYSPSCSKALLNGEEVDYFKLYKLPERHYLAEEIV</sequence>
<accession>Q875S9</accession>
<keyword id="KW-0012">Acyltransferase</keyword>
<keyword id="KW-0040">ANK repeat</keyword>
<keyword id="KW-0967">Endosome</keyword>
<keyword id="KW-0333">Golgi apparatus</keyword>
<keyword id="KW-0449">Lipoprotein</keyword>
<keyword id="KW-0472">Membrane</keyword>
<keyword id="KW-0564">Palmitate</keyword>
<keyword id="KW-0677">Repeat</keyword>
<keyword id="KW-0808">Transferase</keyword>
<keyword id="KW-0812">Transmembrane</keyword>
<keyword id="KW-1133">Transmembrane helix</keyword>